<protein>
    <recommendedName>
        <fullName>GPI mannosyltransferase 1</fullName>
        <ecNumber>2.4.1.-</ecNumber>
    </recommendedName>
    <alternativeName>
        <fullName>GPI mannosyltransferase I</fullName>
        <shortName>GPI-MT-I</shortName>
    </alternativeName>
    <alternativeName>
        <fullName>Glycosylphosphatidylinositol-anchor biosynthesis protein 14</fullName>
    </alternativeName>
</protein>
<dbReference type="EC" id="2.4.1.-"/>
<dbReference type="EMBL" id="CR382139">
    <property type="protein sequence ID" value="CAG90838.2"/>
    <property type="molecule type" value="Genomic_DNA"/>
</dbReference>
<dbReference type="RefSeq" id="XP_462332.2">
    <property type="nucleotide sequence ID" value="XM_462332.2"/>
</dbReference>
<dbReference type="SMR" id="Q6BHI9"/>
<dbReference type="FunCoup" id="Q6BHI9">
    <property type="interactions" value="611"/>
</dbReference>
<dbReference type="STRING" id="284592.Q6BHI9"/>
<dbReference type="CAZy" id="GT50">
    <property type="family name" value="Glycosyltransferase Family 50"/>
</dbReference>
<dbReference type="GeneID" id="2905271"/>
<dbReference type="KEGG" id="dha:DEHA2G18216g"/>
<dbReference type="VEuPathDB" id="FungiDB:DEHA2G18216g"/>
<dbReference type="eggNOG" id="KOG3893">
    <property type="taxonomic scope" value="Eukaryota"/>
</dbReference>
<dbReference type="HOGENOM" id="CLU_024220_1_0_1"/>
<dbReference type="InParanoid" id="Q6BHI9"/>
<dbReference type="OMA" id="MLWFIGQ"/>
<dbReference type="OrthoDB" id="1741594at2759"/>
<dbReference type="UniPathway" id="UPA00196"/>
<dbReference type="Proteomes" id="UP000000599">
    <property type="component" value="Chromosome G"/>
</dbReference>
<dbReference type="GO" id="GO:0005789">
    <property type="term" value="C:endoplasmic reticulum membrane"/>
    <property type="evidence" value="ECO:0007669"/>
    <property type="project" value="UniProtKB-SubCell"/>
</dbReference>
<dbReference type="GO" id="GO:1990529">
    <property type="term" value="C:glycosylphosphatidylinositol-mannosyltransferase I complex"/>
    <property type="evidence" value="ECO:0007669"/>
    <property type="project" value="EnsemblFungi"/>
</dbReference>
<dbReference type="GO" id="GO:0051751">
    <property type="term" value="F:alpha-1,4-mannosyltransferase activity"/>
    <property type="evidence" value="ECO:0007669"/>
    <property type="project" value="InterPro"/>
</dbReference>
<dbReference type="GO" id="GO:0004376">
    <property type="term" value="F:glycolipid mannosyltransferase activity"/>
    <property type="evidence" value="ECO:0007669"/>
    <property type="project" value="InterPro"/>
</dbReference>
<dbReference type="GO" id="GO:0031505">
    <property type="term" value="P:fungal-type cell wall organization"/>
    <property type="evidence" value="ECO:0007669"/>
    <property type="project" value="EnsemblFungi"/>
</dbReference>
<dbReference type="GO" id="GO:0006506">
    <property type="term" value="P:GPI anchor biosynthetic process"/>
    <property type="evidence" value="ECO:0007669"/>
    <property type="project" value="UniProtKB-UniPathway"/>
</dbReference>
<dbReference type="InterPro" id="IPR007704">
    <property type="entry name" value="PIG-M"/>
</dbReference>
<dbReference type="PANTHER" id="PTHR12886:SF0">
    <property type="entry name" value="GPI MANNOSYLTRANSFERASE 1"/>
    <property type="match status" value="1"/>
</dbReference>
<dbReference type="PANTHER" id="PTHR12886">
    <property type="entry name" value="PIG-M MANNOSYLTRANSFERASE"/>
    <property type="match status" value="1"/>
</dbReference>
<dbReference type="Pfam" id="PF05007">
    <property type="entry name" value="Mannosyl_trans"/>
    <property type="match status" value="1"/>
</dbReference>
<name>GPI14_DEBHA</name>
<proteinExistence type="inferred from homology"/>
<evidence type="ECO:0000250" key="1"/>
<evidence type="ECO:0000255" key="2"/>
<evidence type="ECO:0000305" key="3"/>
<comment type="function">
    <text evidence="1">Mannosyltransferase involved in glycosylphosphatidylinositol-anchor biosynthesis. Transfers the first alpha-1,4-mannose to GlcN-acyl-PI during GPI precursor assembly. Required for cell wall integrity (By similarity).</text>
</comment>
<comment type="pathway">
    <text>Glycolipid biosynthesis; glycosylphosphatidylinositol-anchor biosynthesis.</text>
</comment>
<comment type="subcellular location">
    <subcellularLocation>
        <location evidence="1">Endoplasmic reticulum membrane</location>
        <topology evidence="1">Multi-pass membrane protein</topology>
    </subcellularLocation>
</comment>
<comment type="similarity">
    <text evidence="3">Belongs to the PIGM family.</text>
</comment>
<reference key="1">
    <citation type="journal article" date="2004" name="Nature">
        <title>Genome evolution in yeasts.</title>
        <authorList>
            <person name="Dujon B."/>
            <person name="Sherman D."/>
            <person name="Fischer G."/>
            <person name="Durrens P."/>
            <person name="Casaregola S."/>
            <person name="Lafontaine I."/>
            <person name="de Montigny J."/>
            <person name="Marck C."/>
            <person name="Neuveglise C."/>
            <person name="Talla E."/>
            <person name="Goffard N."/>
            <person name="Frangeul L."/>
            <person name="Aigle M."/>
            <person name="Anthouard V."/>
            <person name="Babour A."/>
            <person name="Barbe V."/>
            <person name="Barnay S."/>
            <person name="Blanchin S."/>
            <person name="Beckerich J.-M."/>
            <person name="Beyne E."/>
            <person name="Bleykasten C."/>
            <person name="Boisrame A."/>
            <person name="Boyer J."/>
            <person name="Cattolico L."/>
            <person name="Confanioleri F."/>
            <person name="de Daruvar A."/>
            <person name="Despons L."/>
            <person name="Fabre E."/>
            <person name="Fairhead C."/>
            <person name="Ferry-Dumazet H."/>
            <person name="Groppi A."/>
            <person name="Hantraye F."/>
            <person name="Hennequin C."/>
            <person name="Jauniaux N."/>
            <person name="Joyet P."/>
            <person name="Kachouri R."/>
            <person name="Kerrest A."/>
            <person name="Koszul R."/>
            <person name="Lemaire M."/>
            <person name="Lesur I."/>
            <person name="Ma L."/>
            <person name="Muller H."/>
            <person name="Nicaud J.-M."/>
            <person name="Nikolski M."/>
            <person name="Oztas S."/>
            <person name="Ozier-Kalogeropoulos O."/>
            <person name="Pellenz S."/>
            <person name="Potier S."/>
            <person name="Richard G.-F."/>
            <person name="Straub M.-L."/>
            <person name="Suleau A."/>
            <person name="Swennen D."/>
            <person name="Tekaia F."/>
            <person name="Wesolowski-Louvel M."/>
            <person name="Westhof E."/>
            <person name="Wirth B."/>
            <person name="Zeniou-Meyer M."/>
            <person name="Zivanovic Y."/>
            <person name="Bolotin-Fukuhara M."/>
            <person name="Thierry A."/>
            <person name="Bouchier C."/>
            <person name="Caudron B."/>
            <person name="Scarpelli C."/>
            <person name="Gaillardin C."/>
            <person name="Weissenbach J."/>
            <person name="Wincker P."/>
            <person name="Souciet J.-L."/>
        </authorList>
    </citation>
    <scope>NUCLEOTIDE SEQUENCE [LARGE SCALE GENOMIC DNA]</scope>
    <source>
        <strain>ATCC 36239 / CBS 767 / BCRC 21394 / JCM 1990 / NBRC 0083 / IGC 2968</strain>
    </source>
</reference>
<keyword id="KW-0961">Cell wall biogenesis/degradation</keyword>
<keyword id="KW-0256">Endoplasmic reticulum</keyword>
<keyword id="KW-0328">Glycosyltransferase</keyword>
<keyword id="KW-0337">GPI-anchor biosynthesis</keyword>
<keyword id="KW-0472">Membrane</keyword>
<keyword id="KW-1185">Reference proteome</keyword>
<keyword id="KW-0808">Transferase</keyword>
<keyword id="KW-0812">Transmembrane</keyword>
<keyword id="KW-1133">Transmembrane helix</keyword>
<gene>
    <name type="primary">GPI14</name>
    <name type="ordered locus">DEHA2G18216g</name>
</gene>
<sequence length="414" mass="47873">MLQLSISHIIVLSLLIRIGFFLFGLYQDKYMTVKYTDIDYVVFSDAANYVYNGYSPYSRETYRYTPLLAWMLIPNCWGGQWSNFGKYIFMISDLITGIIILKLLSGISIAGKKLSTNKIIMLSSIWLLNPMVITISTRGSSESVLTVMIMLSLYYLINKKSIIASGFWLGLSIHFKIYPVIYLPSIMLYLSTSGTPFIDVPIVRWVNRTNIKFLITTLITIGAFNGIMYSIYGYEFLYNSYLYHLIRIDHRHNFSVYNVALYYKSALSEIAEASLGFFTGNMEKFVMLPQLSISALILPLLFARRDLISCIFIQTFAFVTFNKVITSQYFIWFLIFLPHYLAQSKLYSNKHMMKGIVALLLWIVSQGSWLYFAYQLEFLGISTFDNGLLFSSFFFYISNCWILSVFIDDLNNDL</sequence>
<organism>
    <name type="scientific">Debaryomyces hansenii (strain ATCC 36239 / CBS 767 / BCRC 21394 / JCM 1990 / NBRC 0083 / IGC 2968)</name>
    <name type="common">Yeast</name>
    <name type="synonym">Torulaspora hansenii</name>
    <dbReference type="NCBI Taxonomy" id="284592"/>
    <lineage>
        <taxon>Eukaryota</taxon>
        <taxon>Fungi</taxon>
        <taxon>Dikarya</taxon>
        <taxon>Ascomycota</taxon>
        <taxon>Saccharomycotina</taxon>
        <taxon>Pichiomycetes</taxon>
        <taxon>Debaryomycetaceae</taxon>
        <taxon>Debaryomyces</taxon>
    </lineage>
</organism>
<feature type="chain" id="PRO_0000246228" description="GPI mannosyltransferase 1">
    <location>
        <begin position="1"/>
        <end position="414"/>
    </location>
</feature>
<feature type="transmembrane region" description="Helical" evidence="2">
    <location>
        <begin position="6"/>
        <end position="26"/>
    </location>
</feature>
<feature type="transmembrane region" description="Helical" evidence="2">
    <location>
        <begin position="87"/>
        <end position="107"/>
    </location>
</feature>
<feature type="transmembrane region" description="Helical" evidence="2">
    <location>
        <begin position="119"/>
        <end position="139"/>
    </location>
</feature>
<feature type="transmembrane region" description="Helical" evidence="2">
    <location>
        <begin position="149"/>
        <end position="171"/>
    </location>
</feature>
<feature type="transmembrane region" description="Helical" evidence="2">
    <location>
        <begin position="183"/>
        <end position="203"/>
    </location>
</feature>
<feature type="transmembrane region" description="Helical" evidence="2">
    <location>
        <begin position="213"/>
        <end position="233"/>
    </location>
</feature>
<feature type="transmembrane region" description="Helical" evidence="2">
    <location>
        <begin position="282"/>
        <end position="302"/>
    </location>
</feature>
<feature type="transmembrane region" description="Helical" evidence="2">
    <location>
        <begin position="316"/>
        <end position="336"/>
    </location>
</feature>
<feature type="transmembrane region" description="Helical" evidence="2">
    <location>
        <begin position="356"/>
        <end position="376"/>
    </location>
</feature>
<feature type="transmembrane region" description="Helical" evidence="2">
    <location>
        <begin position="387"/>
        <end position="407"/>
    </location>
</feature>
<accession>Q6BHI9</accession>